<accession>P0DXZ8</accession>
<name>NDBP6_EUSVA</name>
<proteinExistence type="evidence at protein level"/>
<sequence length="69" mass="7911">MKAQFAILVISMMLLQLIVQTESGFLGNLWEGIKTALGKRGLRNLDDFQDFLDSDTSDADLRMLRDMFR</sequence>
<reference key="1">
    <citation type="journal article" date="2018" name="Theranostics">
        <title>Histidine-rich modification of a scorpion-derived peptide improves bioavailability and inhibitory activity against HSV-1.</title>
        <authorList>
            <person name="Zeng Z."/>
            <person name="Zhang R."/>
            <person name="Hong W."/>
            <person name="Cheng Y."/>
            <person name="Wang H."/>
            <person name="Lang Y."/>
            <person name="Ji Z."/>
            <person name="Wu Y."/>
            <person name="Li W."/>
            <person name="Xie Y."/>
            <person name="Cao Z."/>
        </authorList>
    </citation>
    <scope>NUCLEOTIDE SEQUENCE [MRNA]</scope>
    <scope>SYNTHESIS OF 24-37</scope>
    <scope>PROBABLE AMIDATION AT LEU-37</scope>
    <source>
        <tissue>Venom gland</tissue>
    </source>
</reference>
<comment type="function">
    <text evidence="2">Probable antimicrobial peptide. Shows low inhibitory activity against herpes simplex virus type 1 (HSV-1).</text>
</comment>
<comment type="subcellular location">
    <subcellularLocation>
        <location evidence="5">Secreted</location>
    </subcellularLocation>
</comment>
<comment type="tissue specificity">
    <text evidence="5">Expressed by the venom gland.</text>
</comment>
<comment type="similarity">
    <text evidence="4">Belongs to the non-disulfide-bridged peptide (NDBP) superfamily. Short antimicrobial peptide (group 4) family.</text>
</comment>
<protein>
    <recommendedName>
        <fullName evidence="3">Antimicrobial peptide Eval36</fullName>
    </recommendedName>
</protein>
<evidence type="ECO:0000255" key="1"/>
<evidence type="ECO:0000269" key="2">
    <source>
    </source>
</evidence>
<evidence type="ECO:0000303" key="3">
    <source>
    </source>
</evidence>
<evidence type="ECO:0000305" key="4"/>
<evidence type="ECO:0000305" key="5">
    <source>
    </source>
</evidence>
<feature type="signal peptide" evidence="1">
    <location>
        <begin position="1"/>
        <end position="23"/>
    </location>
</feature>
<feature type="peptide" id="PRO_0000461873" description="Antimicrobial peptide Eval36" evidence="5">
    <location>
        <begin position="24"/>
        <end position="37"/>
    </location>
</feature>
<feature type="propeptide" id="PRO_0000461874" evidence="5">
    <location>
        <begin position="38"/>
        <end position="69"/>
    </location>
</feature>
<feature type="modified residue" description="Leucine amide" evidence="5">
    <location>
        <position position="37"/>
    </location>
</feature>
<keyword id="KW-0027">Amidation</keyword>
<keyword id="KW-0929">Antimicrobial</keyword>
<keyword id="KW-0165">Cleavage on pair of basic residues</keyword>
<keyword id="KW-0964">Secreted</keyword>
<keyword id="KW-0732">Signal</keyword>
<dbReference type="GO" id="GO:0005576">
    <property type="term" value="C:extracellular region"/>
    <property type="evidence" value="ECO:0007669"/>
    <property type="project" value="UniProtKB-SubCell"/>
</dbReference>
<organism>
    <name type="scientific">Euscorpiops validus</name>
    <name type="common">Scorpion</name>
    <dbReference type="NCBI Taxonomy" id="1643527"/>
    <lineage>
        <taxon>Eukaryota</taxon>
        <taxon>Metazoa</taxon>
        <taxon>Ecdysozoa</taxon>
        <taxon>Arthropoda</taxon>
        <taxon>Chelicerata</taxon>
        <taxon>Arachnida</taxon>
        <taxon>Scorpiones</taxon>
        <taxon>Iurida</taxon>
        <taxon>Chactoidea</taxon>
        <taxon>Euscorpiidae</taxon>
        <taxon>Scorpiopinae</taxon>
        <taxon>Scorpiopini</taxon>
        <taxon>Euscorpiops</taxon>
    </lineage>
</organism>